<gene>
    <name type="primary">glpO</name>
    <name type="synonym">glpD</name>
    <name type="ordered locus">LL1245</name>
    <name type="ORF">L0013</name>
</gene>
<dbReference type="EC" id="1.1.3.21"/>
<dbReference type="EMBL" id="AE005176">
    <property type="protein sequence ID" value="AAK05343.1"/>
    <property type="molecule type" value="Genomic_DNA"/>
</dbReference>
<dbReference type="EMBL" id="AF001829">
    <property type="protein sequence ID" value="AAB63270.1"/>
    <property type="molecule type" value="Genomic_DNA"/>
</dbReference>
<dbReference type="PIR" id="E86780">
    <property type="entry name" value="E86780"/>
</dbReference>
<dbReference type="RefSeq" id="NP_267401.1">
    <property type="nucleotide sequence ID" value="NC_002662.1"/>
</dbReference>
<dbReference type="RefSeq" id="WP_010905845.1">
    <property type="nucleotide sequence ID" value="NC_002662.1"/>
</dbReference>
<dbReference type="SMR" id="Q9CG65"/>
<dbReference type="PaxDb" id="272623-L0013"/>
<dbReference type="EnsemblBacteria" id="AAK05343">
    <property type="protein sequence ID" value="AAK05343"/>
    <property type="gene ID" value="L0013"/>
</dbReference>
<dbReference type="KEGG" id="lla:L0013"/>
<dbReference type="PATRIC" id="fig|272623.7.peg.1346"/>
<dbReference type="eggNOG" id="COG0578">
    <property type="taxonomic scope" value="Bacteria"/>
</dbReference>
<dbReference type="HOGENOM" id="CLU_015740_5_2_9"/>
<dbReference type="OrthoDB" id="9766796at2"/>
<dbReference type="Proteomes" id="UP000002196">
    <property type="component" value="Chromosome"/>
</dbReference>
<dbReference type="GO" id="GO:0005737">
    <property type="term" value="C:cytoplasm"/>
    <property type="evidence" value="ECO:0007669"/>
    <property type="project" value="UniProtKB-SubCell"/>
</dbReference>
<dbReference type="GO" id="GO:0004368">
    <property type="term" value="F:glycerol-3-phosphate dehydrogenase (quinone) activity"/>
    <property type="evidence" value="ECO:0007669"/>
    <property type="project" value="InterPro"/>
</dbReference>
<dbReference type="GO" id="GO:0004369">
    <property type="term" value="F:glycerol-3-phosphate oxidase activity"/>
    <property type="evidence" value="ECO:0007669"/>
    <property type="project" value="UniProtKB-EC"/>
</dbReference>
<dbReference type="GO" id="GO:0006071">
    <property type="term" value="P:glycerol metabolic process"/>
    <property type="evidence" value="ECO:0007669"/>
    <property type="project" value="UniProtKB-KW"/>
</dbReference>
<dbReference type="GO" id="GO:0046168">
    <property type="term" value="P:glycerol-3-phosphate catabolic process"/>
    <property type="evidence" value="ECO:0007669"/>
    <property type="project" value="TreeGrafter"/>
</dbReference>
<dbReference type="Gene3D" id="1.10.8.870">
    <property type="entry name" value="Alpha-glycerophosphate oxidase, cap domain"/>
    <property type="match status" value="1"/>
</dbReference>
<dbReference type="Gene3D" id="3.30.9.10">
    <property type="entry name" value="D-Amino Acid Oxidase, subunit A, domain 2"/>
    <property type="match status" value="1"/>
</dbReference>
<dbReference type="Gene3D" id="3.50.50.60">
    <property type="entry name" value="FAD/NAD(P)-binding domain"/>
    <property type="match status" value="1"/>
</dbReference>
<dbReference type="InterPro" id="IPR031656">
    <property type="entry name" value="DAO_C"/>
</dbReference>
<dbReference type="InterPro" id="IPR038299">
    <property type="entry name" value="DAO_C_sf"/>
</dbReference>
<dbReference type="InterPro" id="IPR006076">
    <property type="entry name" value="FAD-dep_OxRdtase"/>
</dbReference>
<dbReference type="InterPro" id="IPR036188">
    <property type="entry name" value="FAD/NAD-bd_sf"/>
</dbReference>
<dbReference type="InterPro" id="IPR000447">
    <property type="entry name" value="G3P_DH_FAD-dep"/>
</dbReference>
<dbReference type="NCBIfam" id="NF033461">
    <property type="entry name" value="glycerol3P_ox_1"/>
    <property type="match status" value="1"/>
</dbReference>
<dbReference type="PANTHER" id="PTHR11985:SF35">
    <property type="entry name" value="ANAEROBIC GLYCEROL-3-PHOSPHATE DEHYDROGENASE SUBUNIT A"/>
    <property type="match status" value="1"/>
</dbReference>
<dbReference type="PANTHER" id="PTHR11985">
    <property type="entry name" value="GLYCEROL-3-PHOSPHATE DEHYDROGENASE"/>
    <property type="match status" value="1"/>
</dbReference>
<dbReference type="Pfam" id="PF01266">
    <property type="entry name" value="DAO"/>
    <property type="match status" value="1"/>
</dbReference>
<dbReference type="Pfam" id="PF16901">
    <property type="entry name" value="DAO_C"/>
    <property type="match status" value="1"/>
</dbReference>
<dbReference type="PRINTS" id="PR01001">
    <property type="entry name" value="FADG3PDH"/>
</dbReference>
<dbReference type="SUPFAM" id="SSF54373">
    <property type="entry name" value="FAD-linked reductases, C-terminal domain"/>
    <property type="match status" value="1"/>
</dbReference>
<dbReference type="SUPFAM" id="SSF51905">
    <property type="entry name" value="FAD/NAD(P)-binding domain"/>
    <property type="match status" value="1"/>
</dbReference>
<dbReference type="PROSITE" id="PS00977">
    <property type="entry name" value="FAD_G3PDH_1"/>
    <property type="match status" value="1"/>
</dbReference>
<keyword id="KW-0963">Cytoplasm</keyword>
<keyword id="KW-0274">FAD</keyword>
<keyword id="KW-0285">Flavoprotein</keyword>
<keyword id="KW-0319">Glycerol metabolism</keyword>
<keyword id="KW-0560">Oxidoreductase</keyword>
<keyword id="KW-1185">Reference proteome</keyword>
<organism>
    <name type="scientific">Lactococcus lactis subsp. lactis (strain IL1403)</name>
    <name type="common">Streptococcus lactis</name>
    <dbReference type="NCBI Taxonomy" id="272623"/>
    <lineage>
        <taxon>Bacteria</taxon>
        <taxon>Bacillati</taxon>
        <taxon>Bacillota</taxon>
        <taxon>Bacilli</taxon>
        <taxon>Lactobacillales</taxon>
        <taxon>Streptococcaceae</taxon>
        <taxon>Lactococcus</taxon>
    </lineage>
</organism>
<name>GLPO_LACLA</name>
<reference key="1">
    <citation type="journal article" date="2001" name="Genome Res.">
        <title>The complete genome sequence of the lactic acid bacterium Lactococcus lactis ssp. lactis IL1403.</title>
        <authorList>
            <person name="Bolotin A."/>
            <person name="Wincker P."/>
            <person name="Mauger S."/>
            <person name="Jaillon O."/>
            <person name="Malarme K."/>
            <person name="Weissenbach J."/>
            <person name="Ehrlich S.D."/>
            <person name="Sorokin A."/>
        </authorList>
    </citation>
    <scope>NUCLEOTIDE SEQUENCE [LARGE SCALE GENOMIC DNA]</scope>
    <source>
        <strain>IL1403</strain>
    </source>
</reference>
<reference key="2">
    <citation type="journal article" date="1997" name="Appl. Environ. Microbiol.">
        <title>Strain-specific differentiation of lactococci in mixed starter culture populations using randomly amplified polymorphic DNA-derived probes.</title>
        <authorList>
            <person name="Erlandson K."/>
            <person name="Batt C.A."/>
        </authorList>
    </citation>
    <scope>NUCLEOTIDE SEQUENCE [GENOMIC DNA] OF 1-253</scope>
    <source>
        <strain>210</strain>
    </source>
</reference>
<feature type="chain" id="PRO_0000126109" description="Alpha-glycerophosphate oxidase">
    <location>
        <begin position="1"/>
        <end position="609"/>
    </location>
</feature>
<feature type="binding site" evidence="2">
    <location>
        <begin position="21"/>
        <end position="49"/>
    </location>
    <ligand>
        <name>FAD</name>
        <dbReference type="ChEBI" id="CHEBI:57692"/>
    </ligand>
</feature>
<feature type="sequence conflict" description="In Ref. 2; AAB63270." evidence="3" ref="2">
    <original>R</original>
    <variation>H</variation>
    <location>
        <position position="152"/>
    </location>
</feature>
<feature type="sequence conflict" description="In Ref. 2; AAB63270." evidence="3" ref="2">
    <original>K</original>
    <variation>R</variation>
    <location>
        <position position="253"/>
    </location>
</feature>
<evidence type="ECO:0000250" key="1"/>
<evidence type="ECO:0000255" key="2"/>
<evidence type="ECO:0000305" key="3"/>
<sequence>MAFSKKTRQEAITKIQNEEMDLLVIGGGITGAGLTLQAAAAGMKVAVLEMQDFSEGTSSRSTKLVHGGIRYLKNFDVEVVSDTVSERAVVQGIAPHIPKPDPMLLPIYDDEGKTTFDMFSVKIAMDLYDRLAGVDEDSPYANYTISPEEVLRREPLIKKKGLQGAGVYLDYRNNDARLVIDNIKKAVEDGAQAISKMKVIDFIYTDGQISGIRARDLLTDQVIEVKAKLVINTSGPWVDKIRYLNFTRPIVPKMRPTKGVHLVVDAAKLPVPQPTYFDTGKHDKRMVFAIPRENKTYFGTTDTDYHGDFTDPKVTQEDVDYLLDVINFRYPEANITINDIEASWAGLRPLLGGNSGSDYNGGDNGAVSETSFNAVVEAVLRYKNKTATKAEVEHLLNNMESSLSEKGDAPSSVSRGSSLERESDGLITLAGGKITDYRKMAAGAMELICQLLEEDFGLKYEPIDSKKYQISGGEFDPTKVEEVVAENMKVGVAAGLTEEEAKYIADFYGMNALQVFAYASEMEAYEGLSLAESARLCYALEDEMILTPVDYLLRRTNHILFMREGVDAIKVHVVNAMADDLGWSAEEKAEQEKALEEALRESDLSDLKK</sequence>
<protein>
    <recommendedName>
        <fullName>Alpha-glycerophosphate oxidase</fullName>
        <ecNumber>1.1.3.21</ecNumber>
    </recommendedName>
    <alternativeName>
        <fullName>Glycerol-3-phosphate oxidase</fullName>
    </alternativeName>
</protein>
<accession>Q9CG65</accession>
<accession>O07381</accession>
<comment type="catalytic activity">
    <reaction>
        <text>sn-glycerol 3-phosphate + O2 = dihydroxyacetone phosphate + H2O2</text>
        <dbReference type="Rhea" id="RHEA:18369"/>
        <dbReference type="ChEBI" id="CHEBI:15379"/>
        <dbReference type="ChEBI" id="CHEBI:16240"/>
        <dbReference type="ChEBI" id="CHEBI:57597"/>
        <dbReference type="ChEBI" id="CHEBI:57642"/>
        <dbReference type="EC" id="1.1.3.21"/>
    </reaction>
</comment>
<comment type="cofactor">
    <cofactor evidence="1">
        <name>FAD</name>
        <dbReference type="ChEBI" id="CHEBI:57692"/>
    </cofactor>
</comment>
<comment type="subcellular location">
    <subcellularLocation>
        <location evidence="1">Cytoplasm</location>
    </subcellularLocation>
</comment>
<comment type="similarity">
    <text evidence="3">Belongs to the FAD-dependent glycerol-3-phosphate dehydrogenase family.</text>
</comment>
<comment type="caution">
    <text evidence="3">As L.lactis is unable to produce acid from glycerol, the significance and/or function of the glpO gene in this organism is at present unknown.</text>
</comment>
<proteinExistence type="inferred from homology"/>